<sequence length="293" mass="32827">MELAQSSLNETTEISAGEEAVFDAGAHPLFSRMPSSVSFNKLRKRLLRQVRQALDDFGMLKGSKRWLVGVSGGKDSYSLLALLMDLKWRGLLPVELVACNLDQGQPNFPKHVLPDYLQSIGVRHRIEYRDTYSIVKEKVPAGATYCSLCSRLRRGNLYRIAREEGCDALVLGHHREDILETFFMNFFHGGRLASMPAKLLNDEGDLMVLRPLAYAAEDDIAKFAAAMEFPIIPCDLCGSQDGLERNAMKAMLSDIERRMPGRKDTMLRALGHVNASHLLDPKLFDFQSLSPEP</sequence>
<dbReference type="EC" id="2.8.1.-" evidence="1"/>
<dbReference type="EMBL" id="CP000738">
    <property type="protein sequence ID" value="ABR60356.1"/>
    <property type="molecule type" value="Genomic_DNA"/>
</dbReference>
<dbReference type="RefSeq" id="WP_011975665.1">
    <property type="nucleotide sequence ID" value="NC_009636.1"/>
</dbReference>
<dbReference type="RefSeq" id="YP_001327191.1">
    <property type="nucleotide sequence ID" value="NC_009636.1"/>
</dbReference>
<dbReference type="SMR" id="A6U9M6"/>
<dbReference type="STRING" id="366394.Smed_1512"/>
<dbReference type="GeneID" id="61612745"/>
<dbReference type="KEGG" id="smd:Smed_1512"/>
<dbReference type="PATRIC" id="fig|366394.8.peg.4645"/>
<dbReference type="eggNOG" id="COG0037">
    <property type="taxonomic scope" value="Bacteria"/>
</dbReference>
<dbReference type="HOGENOM" id="CLU_026481_0_0_5"/>
<dbReference type="OrthoDB" id="9801054at2"/>
<dbReference type="Proteomes" id="UP000001108">
    <property type="component" value="Chromosome"/>
</dbReference>
<dbReference type="GO" id="GO:0005737">
    <property type="term" value="C:cytoplasm"/>
    <property type="evidence" value="ECO:0007669"/>
    <property type="project" value="UniProtKB-SubCell"/>
</dbReference>
<dbReference type="GO" id="GO:0051539">
    <property type="term" value="F:4 iron, 4 sulfur cluster binding"/>
    <property type="evidence" value="ECO:0007669"/>
    <property type="project" value="UniProtKB-UniRule"/>
</dbReference>
<dbReference type="GO" id="GO:0005524">
    <property type="term" value="F:ATP binding"/>
    <property type="evidence" value="ECO:0007669"/>
    <property type="project" value="UniProtKB-UniRule"/>
</dbReference>
<dbReference type="GO" id="GO:0000287">
    <property type="term" value="F:magnesium ion binding"/>
    <property type="evidence" value="ECO:0007669"/>
    <property type="project" value="UniProtKB-UniRule"/>
</dbReference>
<dbReference type="GO" id="GO:0016783">
    <property type="term" value="F:sulfurtransferase activity"/>
    <property type="evidence" value="ECO:0007669"/>
    <property type="project" value="UniProtKB-UniRule"/>
</dbReference>
<dbReference type="GO" id="GO:0000049">
    <property type="term" value="F:tRNA binding"/>
    <property type="evidence" value="ECO:0007669"/>
    <property type="project" value="UniProtKB-KW"/>
</dbReference>
<dbReference type="GO" id="GO:0034227">
    <property type="term" value="P:tRNA thio-modification"/>
    <property type="evidence" value="ECO:0007669"/>
    <property type="project" value="UniProtKB-UniRule"/>
</dbReference>
<dbReference type="CDD" id="cd24138">
    <property type="entry name" value="TtcA-like"/>
    <property type="match status" value="1"/>
</dbReference>
<dbReference type="Gene3D" id="3.40.50.620">
    <property type="entry name" value="HUPs"/>
    <property type="match status" value="1"/>
</dbReference>
<dbReference type="HAMAP" id="MF_01850">
    <property type="entry name" value="TtcA"/>
    <property type="match status" value="1"/>
</dbReference>
<dbReference type="InterPro" id="IPR014729">
    <property type="entry name" value="Rossmann-like_a/b/a_fold"/>
</dbReference>
<dbReference type="InterPro" id="IPR011063">
    <property type="entry name" value="TilS/TtcA_N"/>
</dbReference>
<dbReference type="InterPro" id="IPR012089">
    <property type="entry name" value="tRNA_Cyd_32_2_STrfase"/>
</dbReference>
<dbReference type="InterPro" id="IPR035107">
    <property type="entry name" value="tRNA_thiolation_TtcA_Ctu1"/>
</dbReference>
<dbReference type="NCBIfam" id="NF007972">
    <property type="entry name" value="PRK10696.1"/>
    <property type="match status" value="1"/>
</dbReference>
<dbReference type="PANTHER" id="PTHR43686:SF1">
    <property type="entry name" value="AMINOTRAN_5 DOMAIN-CONTAINING PROTEIN"/>
    <property type="match status" value="1"/>
</dbReference>
<dbReference type="PANTHER" id="PTHR43686">
    <property type="entry name" value="SULFURTRANSFERASE-RELATED"/>
    <property type="match status" value="1"/>
</dbReference>
<dbReference type="Pfam" id="PF01171">
    <property type="entry name" value="ATP_bind_3"/>
    <property type="match status" value="1"/>
</dbReference>
<dbReference type="PIRSF" id="PIRSF004976">
    <property type="entry name" value="ATPase_YdaO"/>
    <property type="match status" value="1"/>
</dbReference>
<dbReference type="SUPFAM" id="SSF52402">
    <property type="entry name" value="Adenine nucleotide alpha hydrolases-like"/>
    <property type="match status" value="1"/>
</dbReference>
<organism>
    <name type="scientific">Sinorhizobium medicae (strain WSM419)</name>
    <name type="common">Ensifer medicae</name>
    <dbReference type="NCBI Taxonomy" id="366394"/>
    <lineage>
        <taxon>Bacteria</taxon>
        <taxon>Pseudomonadati</taxon>
        <taxon>Pseudomonadota</taxon>
        <taxon>Alphaproteobacteria</taxon>
        <taxon>Hyphomicrobiales</taxon>
        <taxon>Rhizobiaceae</taxon>
        <taxon>Sinorhizobium/Ensifer group</taxon>
        <taxon>Sinorhizobium</taxon>
    </lineage>
</organism>
<feature type="chain" id="PRO_0000348856" description="tRNA-cytidine(32) 2-sulfurtransferase">
    <location>
        <begin position="1"/>
        <end position="293"/>
    </location>
</feature>
<feature type="short sequence motif" description="PP-loop motif" evidence="1">
    <location>
        <begin position="71"/>
        <end position="76"/>
    </location>
</feature>
<feature type="binding site" evidence="1">
    <location>
        <position position="146"/>
    </location>
    <ligand>
        <name>[4Fe-4S] cluster</name>
        <dbReference type="ChEBI" id="CHEBI:49883"/>
    </ligand>
</feature>
<feature type="binding site" evidence="1">
    <location>
        <position position="149"/>
    </location>
    <ligand>
        <name>[4Fe-4S] cluster</name>
        <dbReference type="ChEBI" id="CHEBI:49883"/>
    </ligand>
</feature>
<feature type="binding site" evidence="1">
    <location>
        <position position="237"/>
    </location>
    <ligand>
        <name>[4Fe-4S] cluster</name>
        <dbReference type="ChEBI" id="CHEBI:49883"/>
    </ligand>
</feature>
<proteinExistence type="inferred from homology"/>
<protein>
    <recommendedName>
        <fullName evidence="1">tRNA-cytidine(32) 2-sulfurtransferase</fullName>
        <ecNumber evidence="1">2.8.1.-</ecNumber>
    </recommendedName>
    <alternativeName>
        <fullName evidence="1">Two-thiocytidine biosynthesis protein A</fullName>
    </alternativeName>
    <alternativeName>
        <fullName evidence="1">tRNA 2-thiocytidine biosynthesis protein TtcA</fullName>
    </alternativeName>
</protein>
<reference key="1">
    <citation type="submission" date="2007-06" db="EMBL/GenBank/DDBJ databases">
        <title>Complete sequence of Sinorhizobium medicae WSM419 chromosome.</title>
        <authorList>
            <consortium name="US DOE Joint Genome Institute"/>
            <person name="Copeland A."/>
            <person name="Lucas S."/>
            <person name="Lapidus A."/>
            <person name="Barry K."/>
            <person name="Glavina del Rio T."/>
            <person name="Dalin E."/>
            <person name="Tice H."/>
            <person name="Pitluck S."/>
            <person name="Chain P."/>
            <person name="Malfatti S."/>
            <person name="Shin M."/>
            <person name="Vergez L."/>
            <person name="Schmutz J."/>
            <person name="Larimer F."/>
            <person name="Land M."/>
            <person name="Hauser L."/>
            <person name="Kyrpides N."/>
            <person name="Mikhailova N."/>
            <person name="Reeve W.G."/>
            <person name="Richardson P."/>
        </authorList>
    </citation>
    <scope>NUCLEOTIDE SEQUENCE [LARGE SCALE GENOMIC DNA]</scope>
    <source>
        <strain>WSM419</strain>
    </source>
</reference>
<gene>
    <name evidence="1" type="primary">ttcA</name>
    <name type="ordered locus">Smed_1512</name>
</gene>
<accession>A6U9M6</accession>
<keyword id="KW-0004">4Fe-4S</keyword>
<keyword id="KW-0067">ATP-binding</keyword>
<keyword id="KW-0963">Cytoplasm</keyword>
<keyword id="KW-0408">Iron</keyword>
<keyword id="KW-0411">Iron-sulfur</keyword>
<keyword id="KW-0460">Magnesium</keyword>
<keyword id="KW-0479">Metal-binding</keyword>
<keyword id="KW-0547">Nucleotide-binding</keyword>
<keyword id="KW-0694">RNA-binding</keyword>
<keyword id="KW-0808">Transferase</keyword>
<keyword id="KW-0819">tRNA processing</keyword>
<keyword id="KW-0820">tRNA-binding</keyword>
<name>TTCA_SINMW</name>
<comment type="function">
    <text evidence="1">Catalyzes the ATP-dependent 2-thiolation of cytidine in position 32 of tRNA, to form 2-thiocytidine (s(2)C32). The sulfur atoms are provided by the cysteine/cysteine desulfurase (IscS) system.</text>
</comment>
<comment type="catalytic activity">
    <reaction evidence="1">
        <text>cytidine(32) in tRNA + S-sulfanyl-L-cysteinyl-[cysteine desulfurase] + AH2 + ATP = 2-thiocytidine(32) in tRNA + L-cysteinyl-[cysteine desulfurase] + A + AMP + diphosphate + H(+)</text>
        <dbReference type="Rhea" id="RHEA:57048"/>
        <dbReference type="Rhea" id="RHEA-COMP:10288"/>
        <dbReference type="Rhea" id="RHEA-COMP:12157"/>
        <dbReference type="Rhea" id="RHEA-COMP:12158"/>
        <dbReference type="Rhea" id="RHEA-COMP:14821"/>
        <dbReference type="ChEBI" id="CHEBI:13193"/>
        <dbReference type="ChEBI" id="CHEBI:15378"/>
        <dbReference type="ChEBI" id="CHEBI:17499"/>
        <dbReference type="ChEBI" id="CHEBI:29950"/>
        <dbReference type="ChEBI" id="CHEBI:30616"/>
        <dbReference type="ChEBI" id="CHEBI:33019"/>
        <dbReference type="ChEBI" id="CHEBI:61963"/>
        <dbReference type="ChEBI" id="CHEBI:82748"/>
        <dbReference type="ChEBI" id="CHEBI:141453"/>
        <dbReference type="ChEBI" id="CHEBI:456215"/>
    </reaction>
    <physiologicalReaction direction="left-to-right" evidence="1">
        <dbReference type="Rhea" id="RHEA:57049"/>
    </physiologicalReaction>
</comment>
<comment type="cofactor">
    <cofactor evidence="1">
        <name>Mg(2+)</name>
        <dbReference type="ChEBI" id="CHEBI:18420"/>
    </cofactor>
</comment>
<comment type="cofactor">
    <cofactor evidence="1">
        <name>[4Fe-4S] cluster</name>
        <dbReference type="ChEBI" id="CHEBI:49883"/>
    </cofactor>
    <text evidence="1">Binds 1 [4Fe-4S] cluster per subunit. The cluster is chelated by three Cys residues, the fourth Fe has a free coordination site that may bind a sulfur atom transferred from the persulfide of IscS.</text>
</comment>
<comment type="pathway">
    <text evidence="1">tRNA modification.</text>
</comment>
<comment type="subunit">
    <text evidence="1">Homodimer.</text>
</comment>
<comment type="subcellular location">
    <subcellularLocation>
        <location evidence="1">Cytoplasm</location>
    </subcellularLocation>
</comment>
<comment type="miscellaneous">
    <text evidence="1">The thiolation reaction likely consists of two steps: a first activation step by ATP to form an adenylated intermediate of the target base of tRNA, and a second nucleophilic substitution step of the sulfur (S) atom supplied by the hydrosulfide attached to the Fe-S cluster.</text>
</comment>
<comment type="similarity">
    <text evidence="1">Belongs to the TtcA family.</text>
</comment>
<evidence type="ECO:0000255" key="1">
    <source>
        <dbReference type="HAMAP-Rule" id="MF_01850"/>
    </source>
</evidence>